<organism>
    <name type="scientific">Homo sapiens</name>
    <name type="common">Human</name>
    <dbReference type="NCBI Taxonomy" id="9606"/>
    <lineage>
        <taxon>Eukaryota</taxon>
        <taxon>Metazoa</taxon>
        <taxon>Chordata</taxon>
        <taxon>Craniata</taxon>
        <taxon>Vertebrata</taxon>
        <taxon>Euteleostomi</taxon>
        <taxon>Mammalia</taxon>
        <taxon>Eutheria</taxon>
        <taxon>Euarchontoglires</taxon>
        <taxon>Primates</taxon>
        <taxon>Haplorrhini</taxon>
        <taxon>Catarrhini</taxon>
        <taxon>Hominidae</taxon>
        <taxon>Homo</taxon>
    </lineage>
</organism>
<reference key="1">
    <citation type="journal article" date="2004" name="Nat. Genet.">
        <title>Complete sequencing and characterization of 21,243 full-length human cDNAs.</title>
        <authorList>
            <person name="Ota T."/>
            <person name="Suzuki Y."/>
            <person name="Nishikawa T."/>
            <person name="Otsuki T."/>
            <person name="Sugiyama T."/>
            <person name="Irie R."/>
            <person name="Wakamatsu A."/>
            <person name="Hayashi K."/>
            <person name="Sato H."/>
            <person name="Nagai K."/>
            <person name="Kimura K."/>
            <person name="Makita H."/>
            <person name="Sekine M."/>
            <person name="Obayashi M."/>
            <person name="Nishi T."/>
            <person name="Shibahara T."/>
            <person name="Tanaka T."/>
            <person name="Ishii S."/>
            <person name="Yamamoto J."/>
            <person name="Saito K."/>
            <person name="Kawai Y."/>
            <person name="Isono Y."/>
            <person name="Nakamura Y."/>
            <person name="Nagahari K."/>
            <person name="Murakami K."/>
            <person name="Yasuda T."/>
            <person name="Iwayanagi T."/>
            <person name="Wagatsuma M."/>
            <person name="Shiratori A."/>
            <person name="Sudo H."/>
            <person name="Hosoiri T."/>
            <person name="Kaku Y."/>
            <person name="Kodaira H."/>
            <person name="Kondo H."/>
            <person name="Sugawara M."/>
            <person name="Takahashi M."/>
            <person name="Kanda K."/>
            <person name="Yokoi T."/>
            <person name="Furuya T."/>
            <person name="Kikkawa E."/>
            <person name="Omura Y."/>
            <person name="Abe K."/>
            <person name="Kamihara K."/>
            <person name="Katsuta N."/>
            <person name="Sato K."/>
            <person name="Tanikawa M."/>
            <person name="Yamazaki M."/>
            <person name="Ninomiya K."/>
            <person name="Ishibashi T."/>
            <person name="Yamashita H."/>
            <person name="Murakawa K."/>
            <person name="Fujimori K."/>
            <person name="Tanai H."/>
            <person name="Kimata M."/>
            <person name="Watanabe M."/>
            <person name="Hiraoka S."/>
            <person name="Chiba Y."/>
            <person name="Ishida S."/>
            <person name="Ono Y."/>
            <person name="Takiguchi S."/>
            <person name="Watanabe S."/>
            <person name="Yosida M."/>
            <person name="Hotuta T."/>
            <person name="Kusano J."/>
            <person name="Kanehori K."/>
            <person name="Takahashi-Fujii A."/>
            <person name="Hara H."/>
            <person name="Tanase T.-O."/>
            <person name="Nomura Y."/>
            <person name="Togiya S."/>
            <person name="Komai F."/>
            <person name="Hara R."/>
            <person name="Takeuchi K."/>
            <person name="Arita M."/>
            <person name="Imose N."/>
            <person name="Musashino K."/>
            <person name="Yuuki H."/>
            <person name="Oshima A."/>
            <person name="Sasaki N."/>
            <person name="Aotsuka S."/>
            <person name="Yoshikawa Y."/>
            <person name="Matsunawa H."/>
            <person name="Ichihara T."/>
            <person name="Shiohata N."/>
            <person name="Sano S."/>
            <person name="Moriya S."/>
            <person name="Momiyama H."/>
            <person name="Satoh N."/>
            <person name="Takami S."/>
            <person name="Terashima Y."/>
            <person name="Suzuki O."/>
            <person name="Nakagawa S."/>
            <person name="Senoh A."/>
            <person name="Mizoguchi H."/>
            <person name="Goto Y."/>
            <person name="Shimizu F."/>
            <person name="Wakebe H."/>
            <person name="Hishigaki H."/>
            <person name="Watanabe T."/>
            <person name="Sugiyama A."/>
            <person name="Takemoto M."/>
            <person name="Kawakami B."/>
            <person name="Yamazaki M."/>
            <person name="Watanabe K."/>
            <person name="Kumagai A."/>
            <person name="Itakura S."/>
            <person name="Fukuzumi Y."/>
            <person name="Fujimori Y."/>
            <person name="Komiyama M."/>
            <person name="Tashiro H."/>
            <person name="Tanigami A."/>
            <person name="Fujiwara T."/>
            <person name="Ono T."/>
            <person name="Yamada K."/>
            <person name="Fujii Y."/>
            <person name="Ozaki K."/>
            <person name="Hirao M."/>
            <person name="Ohmori Y."/>
            <person name="Kawabata A."/>
            <person name="Hikiji T."/>
            <person name="Kobatake N."/>
            <person name="Inagaki H."/>
            <person name="Ikema Y."/>
            <person name="Okamoto S."/>
            <person name="Okitani R."/>
            <person name="Kawakami T."/>
            <person name="Noguchi S."/>
            <person name="Itoh T."/>
            <person name="Shigeta K."/>
            <person name="Senba T."/>
            <person name="Matsumura K."/>
            <person name="Nakajima Y."/>
            <person name="Mizuno T."/>
            <person name="Morinaga M."/>
            <person name="Sasaki M."/>
            <person name="Togashi T."/>
            <person name="Oyama M."/>
            <person name="Hata H."/>
            <person name="Watanabe M."/>
            <person name="Komatsu T."/>
            <person name="Mizushima-Sugano J."/>
            <person name="Satoh T."/>
            <person name="Shirai Y."/>
            <person name="Takahashi Y."/>
            <person name="Nakagawa K."/>
            <person name="Okumura K."/>
            <person name="Nagase T."/>
            <person name="Nomura N."/>
            <person name="Kikuchi H."/>
            <person name="Masuho Y."/>
            <person name="Yamashita R."/>
            <person name="Nakai K."/>
            <person name="Yada T."/>
            <person name="Nakamura Y."/>
            <person name="Ohara O."/>
            <person name="Isogai T."/>
            <person name="Sugano S."/>
        </authorList>
    </citation>
    <scope>NUCLEOTIDE SEQUENCE [LARGE SCALE MRNA] (ISOFORM 1)</scope>
    <source>
        <tissue>Brain</tissue>
    </source>
</reference>
<reference key="2">
    <citation type="journal article" date="2004" name="Nature">
        <title>The DNA sequence and comparative analysis of human chromosome 5.</title>
        <authorList>
            <person name="Schmutz J."/>
            <person name="Martin J."/>
            <person name="Terry A."/>
            <person name="Couronne O."/>
            <person name="Grimwood J."/>
            <person name="Lowry S."/>
            <person name="Gordon L.A."/>
            <person name="Scott D."/>
            <person name="Xie G."/>
            <person name="Huang W."/>
            <person name="Hellsten U."/>
            <person name="Tran-Gyamfi M."/>
            <person name="She X."/>
            <person name="Prabhakar S."/>
            <person name="Aerts A."/>
            <person name="Altherr M."/>
            <person name="Bajorek E."/>
            <person name="Black S."/>
            <person name="Branscomb E."/>
            <person name="Caoile C."/>
            <person name="Challacombe J.F."/>
            <person name="Chan Y.M."/>
            <person name="Denys M."/>
            <person name="Detter J.C."/>
            <person name="Escobar J."/>
            <person name="Flowers D."/>
            <person name="Fotopulos D."/>
            <person name="Glavina T."/>
            <person name="Gomez M."/>
            <person name="Gonzales E."/>
            <person name="Goodstein D."/>
            <person name="Grigoriev I."/>
            <person name="Groza M."/>
            <person name="Hammon N."/>
            <person name="Hawkins T."/>
            <person name="Haydu L."/>
            <person name="Israni S."/>
            <person name="Jett J."/>
            <person name="Kadner K."/>
            <person name="Kimball H."/>
            <person name="Kobayashi A."/>
            <person name="Lopez F."/>
            <person name="Lou Y."/>
            <person name="Martinez D."/>
            <person name="Medina C."/>
            <person name="Morgan J."/>
            <person name="Nandkeshwar R."/>
            <person name="Noonan J.P."/>
            <person name="Pitluck S."/>
            <person name="Pollard M."/>
            <person name="Predki P."/>
            <person name="Priest J."/>
            <person name="Ramirez L."/>
            <person name="Retterer J."/>
            <person name="Rodriguez A."/>
            <person name="Rogers S."/>
            <person name="Salamov A."/>
            <person name="Salazar A."/>
            <person name="Thayer N."/>
            <person name="Tice H."/>
            <person name="Tsai M."/>
            <person name="Ustaszewska A."/>
            <person name="Vo N."/>
            <person name="Wheeler J."/>
            <person name="Wu K."/>
            <person name="Yang J."/>
            <person name="Dickson M."/>
            <person name="Cheng J.-F."/>
            <person name="Eichler E.E."/>
            <person name="Olsen A."/>
            <person name="Pennacchio L.A."/>
            <person name="Rokhsar D.S."/>
            <person name="Richardson P."/>
            <person name="Lucas S.M."/>
            <person name="Myers R.M."/>
            <person name="Rubin E.M."/>
        </authorList>
    </citation>
    <scope>NUCLEOTIDE SEQUENCE [LARGE SCALE GENOMIC DNA]</scope>
</reference>
<reference key="3">
    <citation type="submission" date="2005-09" db="EMBL/GenBank/DDBJ databases">
        <authorList>
            <person name="Mural R.J."/>
            <person name="Istrail S."/>
            <person name="Sutton G.G."/>
            <person name="Florea L."/>
            <person name="Halpern A.L."/>
            <person name="Mobarry C.M."/>
            <person name="Lippert R."/>
            <person name="Walenz B."/>
            <person name="Shatkay H."/>
            <person name="Dew I."/>
            <person name="Miller J.R."/>
            <person name="Flanigan M.J."/>
            <person name="Edwards N.J."/>
            <person name="Bolanos R."/>
            <person name="Fasulo D."/>
            <person name="Halldorsson B.V."/>
            <person name="Hannenhalli S."/>
            <person name="Turner R."/>
            <person name="Yooseph S."/>
            <person name="Lu F."/>
            <person name="Nusskern D.R."/>
            <person name="Shue B.C."/>
            <person name="Zheng X.H."/>
            <person name="Zhong F."/>
            <person name="Delcher A.L."/>
            <person name="Huson D.H."/>
            <person name="Kravitz S.A."/>
            <person name="Mouchard L."/>
            <person name="Reinert K."/>
            <person name="Remington K.A."/>
            <person name="Clark A.G."/>
            <person name="Waterman M.S."/>
            <person name="Eichler E.E."/>
            <person name="Adams M.D."/>
            <person name="Hunkapiller M.W."/>
            <person name="Myers E.W."/>
            <person name="Venter J.C."/>
        </authorList>
    </citation>
    <scope>NUCLEOTIDE SEQUENCE [LARGE SCALE GENOMIC DNA]</scope>
</reference>
<reference key="4">
    <citation type="journal article" date="2004" name="Genome Res.">
        <title>The status, quality, and expansion of the NIH full-length cDNA project: the Mammalian Gene Collection (MGC).</title>
        <authorList>
            <consortium name="The MGC Project Team"/>
        </authorList>
    </citation>
    <scope>NUCLEOTIDE SEQUENCE [LARGE SCALE MRNA] (ISOFORMS 2 AND 3)</scope>
    <source>
        <tissue>Melanoma</tissue>
        <tissue>Prostate</tissue>
    </source>
</reference>
<accession>Q8N945</accession>
<accession>G5EA01</accession>
<accession>Q96EQ3</accession>
<protein>
    <recommendedName>
        <fullName>PRELI domain-containing protein 2</fullName>
    </recommendedName>
</protein>
<dbReference type="EMBL" id="AK095695">
    <property type="protein sequence ID" value="BAC04611.1"/>
    <property type="molecule type" value="mRNA"/>
</dbReference>
<dbReference type="EMBL" id="AC008631">
    <property type="status" value="NOT_ANNOTATED_CDS"/>
    <property type="molecule type" value="Genomic_DNA"/>
</dbReference>
<dbReference type="EMBL" id="AC008700">
    <property type="status" value="NOT_ANNOTATED_CDS"/>
    <property type="molecule type" value="Genomic_DNA"/>
</dbReference>
<dbReference type="EMBL" id="AC011355">
    <property type="status" value="NOT_ANNOTATED_CDS"/>
    <property type="molecule type" value="Genomic_DNA"/>
</dbReference>
<dbReference type="EMBL" id="AC011359">
    <property type="status" value="NOT_ANNOTATED_CDS"/>
    <property type="molecule type" value="Genomic_DNA"/>
</dbReference>
<dbReference type="EMBL" id="AC011411">
    <property type="status" value="NOT_ANNOTATED_CDS"/>
    <property type="molecule type" value="Genomic_DNA"/>
</dbReference>
<dbReference type="EMBL" id="CH471062">
    <property type="protein sequence ID" value="EAW61857.1"/>
    <property type="molecule type" value="Genomic_DNA"/>
</dbReference>
<dbReference type="EMBL" id="CH471062">
    <property type="protein sequence ID" value="EAW61858.1"/>
    <property type="molecule type" value="Genomic_DNA"/>
</dbReference>
<dbReference type="EMBL" id="BC012033">
    <property type="protein sequence ID" value="AAH12033.1"/>
    <property type="molecule type" value="mRNA"/>
</dbReference>
<dbReference type="EMBL" id="BQ425760">
    <property type="status" value="NOT_ANNOTATED_CDS"/>
    <property type="molecule type" value="mRNA"/>
</dbReference>
<dbReference type="CCDS" id="CCDS34261.1">
    <molecule id="Q8N945-3"/>
</dbReference>
<dbReference type="CCDS" id="CCDS34262.1">
    <molecule id="Q8N945-1"/>
</dbReference>
<dbReference type="CCDS" id="CCDS43377.1">
    <molecule id="Q8N945-2"/>
</dbReference>
<dbReference type="RefSeq" id="NP_612501.3">
    <molecule id="Q8N945-2"/>
    <property type="nucleotide sequence ID" value="NM_138492.5"/>
</dbReference>
<dbReference type="RefSeq" id="NP_892005.1">
    <molecule id="Q8N945-1"/>
    <property type="nucleotide sequence ID" value="NM_182960.4"/>
</dbReference>
<dbReference type="RefSeq" id="NP_995318.1">
    <molecule id="Q8N945-3"/>
    <property type="nucleotide sequence ID" value="NM_205846.3"/>
</dbReference>
<dbReference type="RefSeq" id="XP_016864618.1">
    <property type="nucleotide sequence ID" value="XM_017009129.1"/>
</dbReference>
<dbReference type="RefSeq" id="XP_016864619.1">
    <molecule id="Q8N945-1"/>
    <property type="nucleotide sequence ID" value="XM_017009130.2"/>
</dbReference>
<dbReference type="RefSeq" id="XP_016864620.1">
    <molecule id="Q8N945-1"/>
    <property type="nucleotide sequence ID" value="XM_017009131.2"/>
</dbReference>
<dbReference type="RefSeq" id="XP_047272784.1">
    <molecule id="Q8N945-1"/>
    <property type="nucleotide sequence ID" value="XM_047416828.1"/>
</dbReference>
<dbReference type="RefSeq" id="XP_047272786.1">
    <molecule id="Q8N945-3"/>
    <property type="nucleotide sequence ID" value="XM_047416830.1"/>
</dbReference>
<dbReference type="RefSeq" id="XP_047272787.1">
    <molecule id="Q8N945-3"/>
    <property type="nucleotide sequence ID" value="XM_047416831.1"/>
</dbReference>
<dbReference type="RefSeq" id="XP_054207814.1">
    <molecule id="Q8N945-1"/>
    <property type="nucleotide sequence ID" value="XM_054351839.1"/>
</dbReference>
<dbReference type="RefSeq" id="XP_054207815.1">
    <molecule id="Q8N945-1"/>
    <property type="nucleotide sequence ID" value="XM_054351840.1"/>
</dbReference>
<dbReference type="RefSeq" id="XP_054207816.1">
    <molecule id="Q8N945-1"/>
    <property type="nucleotide sequence ID" value="XM_054351841.1"/>
</dbReference>
<dbReference type="RefSeq" id="XP_054207818.1">
    <molecule id="Q8N945-3"/>
    <property type="nucleotide sequence ID" value="XM_054351843.1"/>
</dbReference>
<dbReference type="RefSeq" id="XP_054207819.1">
    <molecule id="Q8N945-3"/>
    <property type="nucleotide sequence ID" value="XM_054351844.1"/>
</dbReference>
<dbReference type="SMR" id="Q8N945"/>
<dbReference type="BioGRID" id="127516">
    <property type="interactions" value="18"/>
</dbReference>
<dbReference type="FunCoup" id="Q8N945">
    <property type="interactions" value="32"/>
</dbReference>
<dbReference type="IntAct" id="Q8N945">
    <property type="interactions" value="16"/>
</dbReference>
<dbReference type="STRING" id="9606.ENSP00000335675"/>
<dbReference type="iPTMnet" id="Q8N945"/>
<dbReference type="PhosphoSitePlus" id="Q8N945"/>
<dbReference type="BioMuta" id="PRELID2"/>
<dbReference type="DMDM" id="74729598"/>
<dbReference type="MassIVE" id="Q8N945"/>
<dbReference type="PaxDb" id="9606-ENSP00000335675"/>
<dbReference type="PeptideAtlas" id="Q8N945"/>
<dbReference type="ProteomicsDB" id="34099"/>
<dbReference type="ProteomicsDB" id="72486">
    <molecule id="Q8N945-1"/>
</dbReference>
<dbReference type="ProteomicsDB" id="72487">
    <molecule id="Q8N945-2"/>
</dbReference>
<dbReference type="Antibodypedia" id="27490">
    <property type="antibodies" value="93 antibodies from 15 providers"/>
</dbReference>
<dbReference type="DNASU" id="153768"/>
<dbReference type="Ensembl" id="ENST00000334744.8">
    <molecule id="Q8N945-1"/>
    <property type="protein sequence ID" value="ENSP00000335675.4"/>
    <property type="gene ID" value="ENSG00000186314.12"/>
</dbReference>
<dbReference type="Ensembl" id="ENST00000394450.6">
    <molecule id="Q8N945-2"/>
    <property type="protein sequence ID" value="ENSP00000377965.2"/>
    <property type="gene ID" value="ENSG00000186314.12"/>
</dbReference>
<dbReference type="Ensembl" id="ENST00000505416.5">
    <molecule id="Q8N945-3"/>
    <property type="protein sequence ID" value="ENSP00000424730.1"/>
    <property type="gene ID" value="ENSG00000186314.12"/>
</dbReference>
<dbReference type="Ensembl" id="ENST00000683046.1">
    <molecule id="Q8N945-3"/>
    <property type="protein sequence ID" value="ENSP00000506938.1"/>
    <property type="gene ID" value="ENSG00000186314.12"/>
</dbReference>
<dbReference type="GeneID" id="153768"/>
<dbReference type="KEGG" id="hsa:153768"/>
<dbReference type="MANE-Select" id="ENST00000683046.1">
    <molecule id="Q8N945-3"/>
    <property type="protein sequence ID" value="ENSP00000506938.1"/>
    <property type="RefSeq nucleotide sequence ID" value="NM_205846.3"/>
    <property type="RefSeq protein sequence ID" value="NP_995318.1"/>
</dbReference>
<dbReference type="UCSC" id="uc003lno.3">
    <molecule id="Q8N945-1"/>
    <property type="organism name" value="human"/>
</dbReference>
<dbReference type="AGR" id="HGNC:28306"/>
<dbReference type="CTD" id="153768"/>
<dbReference type="DisGeNET" id="153768"/>
<dbReference type="GeneCards" id="PRELID2"/>
<dbReference type="HGNC" id="HGNC:28306">
    <property type="gene designation" value="PRELID2"/>
</dbReference>
<dbReference type="HPA" id="ENSG00000186314">
    <property type="expression patterns" value="Tissue enhanced (intestine, retina)"/>
</dbReference>
<dbReference type="MIM" id="620750">
    <property type="type" value="gene"/>
</dbReference>
<dbReference type="neXtProt" id="NX_Q8N945"/>
<dbReference type="OpenTargets" id="ENSG00000186314"/>
<dbReference type="PharmGKB" id="PA162400041"/>
<dbReference type="VEuPathDB" id="HostDB:ENSG00000186314"/>
<dbReference type="eggNOG" id="ENOG502RYVE">
    <property type="taxonomic scope" value="Eukaryota"/>
</dbReference>
<dbReference type="GeneTree" id="ENSGT00950000182810"/>
<dbReference type="HOGENOM" id="CLU_067902_6_0_1"/>
<dbReference type="InParanoid" id="Q8N945"/>
<dbReference type="OMA" id="CRNVVPE"/>
<dbReference type="OrthoDB" id="407630at2759"/>
<dbReference type="PAN-GO" id="Q8N945">
    <property type="GO annotations" value="3 GO annotations based on evolutionary models"/>
</dbReference>
<dbReference type="PhylomeDB" id="Q8N945"/>
<dbReference type="TreeFam" id="TF337953"/>
<dbReference type="PathwayCommons" id="Q8N945"/>
<dbReference type="BioGRID-ORCS" id="153768">
    <property type="hits" value="12 hits in 1160 CRISPR screens"/>
</dbReference>
<dbReference type="ChiTaRS" id="PRELID2">
    <property type="organism name" value="human"/>
</dbReference>
<dbReference type="GenomeRNAi" id="153768"/>
<dbReference type="Pharos" id="Q8N945">
    <property type="development level" value="Tdark"/>
</dbReference>
<dbReference type="PRO" id="PR:Q8N945"/>
<dbReference type="Proteomes" id="UP000005640">
    <property type="component" value="Chromosome 5"/>
</dbReference>
<dbReference type="RNAct" id="Q8N945">
    <property type="molecule type" value="protein"/>
</dbReference>
<dbReference type="Bgee" id="ENSG00000186314">
    <property type="expression patterns" value="Expressed in oocyte and 143 other cell types or tissues"/>
</dbReference>
<dbReference type="ExpressionAtlas" id="Q8N945">
    <property type="expression patterns" value="baseline and differential"/>
</dbReference>
<dbReference type="GO" id="GO:0005758">
    <property type="term" value="C:mitochondrial intermembrane space"/>
    <property type="evidence" value="ECO:0000318"/>
    <property type="project" value="GO_Central"/>
</dbReference>
<dbReference type="GO" id="GO:1990050">
    <property type="term" value="F:phosphatidic acid transfer activity"/>
    <property type="evidence" value="ECO:0000318"/>
    <property type="project" value="GO_Central"/>
</dbReference>
<dbReference type="GO" id="GO:0015914">
    <property type="term" value="P:phospholipid transport"/>
    <property type="evidence" value="ECO:0000318"/>
    <property type="project" value="GO_Central"/>
</dbReference>
<dbReference type="InterPro" id="IPR006797">
    <property type="entry name" value="PRELI/MSF1_dom"/>
</dbReference>
<dbReference type="InterPro" id="IPR037365">
    <property type="entry name" value="Slowmo/Ups"/>
</dbReference>
<dbReference type="PANTHER" id="PTHR11158">
    <property type="entry name" value="MSF1/PX19 RELATED"/>
    <property type="match status" value="1"/>
</dbReference>
<dbReference type="Pfam" id="PF04707">
    <property type="entry name" value="PRELI"/>
    <property type="match status" value="1"/>
</dbReference>
<dbReference type="PROSITE" id="PS50904">
    <property type="entry name" value="PRELI_MSF1"/>
    <property type="match status" value="1"/>
</dbReference>
<gene>
    <name type="primary">PRELID2</name>
</gene>
<feature type="chain" id="PRO_0000307773" description="PRELI domain-containing protein 2">
    <location>
        <begin position="1"/>
        <end position="189"/>
    </location>
</feature>
<feature type="domain" description="PRELI/MSF1" evidence="1">
    <location>
        <begin position="1"/>
        <end position="187"/>
    </location>
</feature>
<feature type="splice variant" id="VSP_028824" description="In isoform 2." evidence="2">
    <location>
        <begin position="1"/>
        <end position="29"/>
    </location>
</feature>
<feature type="splice variant" id="VSP_044841" description="In isoform 3." evidence="2">
    <location>
        <begin position="69"/>
        <end position="80"/>
    </location>
</feature>
<feature type="splice variant" id="VSP_028825" description="In isoform 2." evidence="2">
    <location>
        <begin position="70"/>
        <end position="81"/>
    </location>
</feature>
<feature type="sequence variant" id="VAR_053910" description="In dbSNP:rs9324996.">
    <original>N</original>
    <variation>S</variation>
    <location>
        <position position="99"/>
    </location>
</feature>
<keyword id="KW-0025">Alternative splicing</keyword>
<keyword id="KW-1267">Proteomics identification</keyword>
<keyword id="KW-1185">Reference proteome</keyword>
<comment type="alternative products">
    <event type="alternative splicing"/>
    <isoform>
        <id>Q8N945-1</id>
        <name>1</name>
        <sequence type="displayed"/>
    </isoform>
    <isoform>
        <id>Q8N945-2</id>
        <name>2</name>
        <sequence type="described" ref="VSP_028824 VSP_028825"/>
    </isoform>
    <isoform>
        <id>Q8N945-3</id>
        <name>3</name>
        <sequence type="described" ref="VSP_044841"/>
    </isoform>
</comment>
<comment type="sequence caution" evidence="3">
    <conflict type="frameshift">
        <sequence resource="EMBL" id="BQ425760"/>
    </conflict>
</comment>
<name>PRLD2_HUMAN</name>
<evidence type="ECO:0000255" key="1">
    <source>
        <dbReference type="PROSITE-ProRule" id="PRU00158"/>
    </source>
</evidence>
<evidence type="ECO:0000303" key="2">
    <source>
    </source>
</evidence>
<evidence type="ECO:0000305" key="3"/>
<sequence length="189" mass="21905">MGVSVDVHQVYKYPFEQVVASFLRKYPNPMDKNVISVKIMEEKRDESTGVIYRKRIAICQNVVPEILRKSLSTLVILCWKKVSILKVPNIQLEEESWLNPRERNMAIRSHCLTWTQYASMKEESVFRESMENPNWTEFIQRGRISITGVGFLNCVLETFASTFLRQGAQKGIRIMEMLLKEQCGAPLAE</sequence>
<proteinExistence type="evidence at protein level"/>